<proteinExistence type="evidence at protein level"/>
<feature type="chain" id="PRO_0000157625" description="Large ribosomal subunit protein P1">
    <location>
        <begin position="1"/>
        <end position="111"/>
    </location>
</feature>
<feature type="region of interest" description="Disordered" evidence="2">
    <location>
        <begin position="75"/>
        <end position="111"/>
    </location>
</feature>
<feature type="compositionally biased region" description="Acidic residues" evidence="2">
    <location>
        <begin position="88"/>
        <end position="101"/>
    </location>
</feature>
<feature type="helix" evidence="3">
    <location>
        <begin position="105"/>
        <end position="108"/>
    </location>
</feature>
<keyword id="KW-0002">3D-structure</keyword>
<keyword id="KW-1185">Reference proteome</keyword>
<keyword id="KW-0687">Ribonucleoprotein</keyword>
<keyword id="KW-0689">Ribosomal protein</keyword>
<organism>
    <name type="scientific">Aeropyrum pernix (strain ATCC 700893 / DSM 11879 / JCM 9820 / NBRC 100138 / K1)</name>
    <dbReference type="NCBI Taxonomy" id="272557"/>
    <lineage>
        <taxon>Archaea</taxon>
        <taxon>Thermoproteota</taxon>
        <taxon>Thermoprotei</taxon>
        <taxon>Desulfurococcales</taxon>
        <taxon>Desulfurococcaceae</taxon>
        <taxon>Aeropyrum</taxon>
    </lineage>
</organism>
<accession>Q9Y9W9</accession>
<comment type="function">
    <text evidence="1">Forms part of the ribosomal stalk, playing a central role in the interaction of the ribosome with GTP-bound translation factors.</text>
</comment>
<comment type="subunit">
    <text evidence="1">Part of the 50S ribosomal subunit. Homodimer, it forms part of the ribosomal stalk which helps the ribosome interact with GTP-bound translation factors. Forms a heptameric uL10/P0(P1)2(P1)2(P1)2 complex, where uL10/P0 forms an elongated spine to which the P1 dimers bind in a sequential fashion.</text>
</comment>
<comment type="similarity">
    <text evidence="1">Belongs to the eukaryotic ribosomal protein P1/P2 family.</text>
</comment>
<reference key="1">
    <citation type="journal article" date="1999" name="DNA Res.">
        <title>Complete genome sequence of an aerobic hyper-thermophilic crenarchaeon, Aeropyrum pernix K1.</title>
        <authorList>
            <person name="Kawarabayasi Y."/>
            <person name="Hino Y."/>
            <person name="Horikawa H."/>
            <person name="Yamazaki S."/>
            <person name="Haikawa Y."/>
            <person name="Jin-no K."/>
            <person name="Takahashi M."/>
            <person name="Sekine M."/>
            <person name="Baba S."/>
            <person name="Ankai A."/>
            <person name="Kosugi H."/>
            <person name="Hosoyama A."/>
            <person name="Fukui S."/>
            <person name="Nagai Y."/>
            <person name="Nishijima K."/>
            <person name="Nakazawa H."/>
            <person name="Takamiya M."/>
            <person name="Masuda S."/>
            <person name="Funahashi T."/>
            <person name="Tanaka T."/>
            <person name="Kudoh Y."/>
            <person name="Yamazaki J."/>
            <person name="Kushida N."/>
            <person name="Oguchi A."/>
            <person name="Aoki K."/>
            <person name="Kubota K."/>
            <person name="Nakamura Y."/>
            <person name="Nomura N."/>
            <person name="Sako Y."/>
            <person name="Kikuchi H."/>
        </authorList>
    </citation>
    <scope>NUCLEOTIDE SEQUENCE [LARGE SCALE GENOMIC DNA]</scope>
    <source>
        <strain>ATCC 700893 / DSM 11879 / JCM 9820 / NBRC 100138 / K1</strain>
    </source>
</reference>
<sequence>MAQEGKAYIHLALAIYYAGGKIDEETLKKAAEAIGMQVDEAKIKMLVASLEEVNLEEVLKQAVAAPVAAAAAAPAAAPAAEEKAEEEKKEEEEEKKEEEVDLSGLSGMFGF</sequence>
<gene>
    <name evidence="1" type="primary">rpl12</name>
    <name type="ordered locus">APE_2170</name>
</gene>
<dbReference type="EMBL" id="BA000002">
    <property type="protein sequence ID" value="BAA81181.1"/>
    <property type="molecule type" value="Genomic_DNA"/>
</dbReference>
<dbReference type="PIR" id="E72524">
    <property type="entry name" value="E72524"/>
</dbReference>
<dbReference type="RefSeq" id="WP_010866840.1">
    <property type="nucleotide sequence ID" value="NC_000854.2"/>
</dbReference>
<dbReference type="PDB" id="5YT0">
    <property type="method" value="X-ray"/>
    <property type="resolution" value="1.89 A"/>
    <property type="chains" value="B=91-111"/>
</dbReference>
<dbReference type="PDB" id="6JI2">
    <property type="method" value="X-ray"/>
    <property type="resolution" value="3.00 A"/>
    <property type="chains" value="X=95-111"/>
</dbReference>
<dbReference type="PDBsum" id="5YT0"/>
<dbReference type="PDBsum" id="6JI2"/>
<dbReference type="SMR" id="Q9Y9W9"/>
<dbReference type="STRING" id="272557.APE_2170"/>
<dbReference type="EnsemblBacteria" id="BAA81181">
    <property type="protein sequence ID" value="BAA81181"/>
    <property type="gene ID" value="APE_2170"/>
</dbReference>
<dbReference type="GeneID" id="1445237"/>
<dbReference type="KEGG" id="ape:APE_2170"/>
<dbReference type="eggNOG" id="arCOG04287">
    <property type="taxonomic scope" value="Archaea"/>
</dbReference>
<dbReference type="Proteomes" id="UP000002518">
    <property type="component" value="Chromosome"/>
</dbReference>
<dbReference type="GO" id="GO:1990904">
    <property type="term" value="C:ribonucleoprotein complex"/>
    <property type="evidence" value="ECO:0007669"/>
    <property type="project" value="UniProtKB-KW"/>
</dbReference>
<dbReference type="GO" id="GO:0005840">
    <property type="term" value="C:ribosome"/>
    <property type="evidence" value="ECO:0007669"/>
    <property type="project" value="UniProtKB-KW"/>
</dbReference>
<dbReference type="GO" id="GO:0003735">
    <property type="term" value="F:structural constituent of ribosome"/>
    <property type="evidence" value="ECO:0007669"/>
    <property type="project" value="InterPro"/>
</dbReference>
<dbReference type="GO" id="GO:0006414">
    <property type="term" value="P:translational elongation"/>
    <property type="evidence" value="ECO:0007669"/>
    <property type="project" value="InterPro"/>
</dbReference>
<dbReference type="Gene3D" id="1.10.10.1410">
    <property type="match status" value="1"/>
</dbReference>
<dbReference type="HAMAP" id="MF_01478">
    <property type="entry name" value="Ribosomal_L12_arch"/>
    <property type="match status" value="1"/>
</dbReference>
<dbReference type="InterPro" id="IPR038716">
    <property type="entry name" value="P1/P2_N_sf"/>
</dbReference>
<dbReference type="InterPro" id="IPR027534">
    <property type="entry name" value="Ribosomal_P1/P2"/>
</dbReference>
<dbReference type="InterPro" id="IPR022295">
    <property type="entry name" value="Ribosomal_P1_arc"/>
</dbReference>
<dbReference type="NCBIfam" id="TIGR03685">
    <property type="entry name" value="ribo_P1_arch"/>
    <property type="match status" value="1"/>
</dbReference>
<dbReference type="Pfam" id="PF00428">
    <property type="entry name" value="Ribosomal_60s"/>
    <property type="match status" value="1"/>
</dbReference>
<name>RL12_AERPE</name>
<protein>
    <recommendedName>
        <fullName evidence="1">Large ribosomal subunit protein P1</fullName>
    </recommendedName>
    <alternativeName>
        <fullName evidence="1">50S ribosomal protein L12</fullName>
    </alternativeName>
</protein>
<evidence type="ECO:0000255" key="1">
    <source>
        <dbReference type="HAMAP-Rule" id="MF_01478"/>
    </source>
</evidence>
<evidence type="ECO:0000256" key="2">
    <source>
        <dbReference type="SAM" id="MobiDB-lite"/>
    </source>
</evidence>
<evidence type="ECO:0007829" key="3">
    <source>
        <dbReference type="PDB" id="5YT0"/>
    </source>
</evidence>